<organism>
    <name type="scientific">Escherichia coli O157:H7</name>
    <dbReference type="NCBI Taxonomy" id="83334"/>
    <lineage>
        <taxon>Bacteria</taxon>
        <taxon>Pseudomonadati</taxon>
        <taxon>Pseudomonadota</taxon>
        <taxon>Gammaproteobacteria</taxon>
        <taxon>Enterobacterales</taxon>
        <taxon>Enterobacteriaceae</taxon>
        <taxon>Escherichia</taxon>
    </lineage>
</organism>
<evidence type="ECO:0000255" key="1">
    <source>
        <dbReference type="HAMAP-Rule" id="MF_00102"/>
    </source>
</evidence>
<evidence type="ECO:0000305" key="2"/>
<keyword id="KW-0028">Amino-acid biosynthesis</keyword>
<keyword id="KW-0963">Cytoplasm</keyword>
<keyword id="KW-0220">Diaminopimelate biosynthesis</keyword>
<keyword id="KW-0457">Lysine biosynthesis</keyword>
<keyword id="KW-0520">NAD</keyword>
<keyword id="KW-0521">NADP</keyword>
<keyword id="KW-0560">Oxidoreductase</keyword>
<keyword id="KW-1185">Reference proteome</keyword>
<feature type="chain" id="PRO_0000141438" description="4-hydroxy-tetrahydrodipicolinate reductase">
    <location>
        <begin position="1"/>
        <end position="273"/>
    </location>
</feature>
<feature type="active site" description="Proton donor/acceptor" evidence="1">
    <location>
        <position position="159"/>
    </location>
</feature>
<feature type="active site" description="Proton donor" evidence="1">
    <location>
        <position position="163"/>
    </location>
</feature>
<feature type="binding site" evidence="1">
    <location>
        <begin position="12"/>
        <end position="17"/>
    </location>
    <ligand>
        <name>NAD(+)</name>
        <dbReference type="ChEBI" id="CHEBI:57540"/>
    </ligand>
</feature>
<feature type="binding site" evidence="1">
    <location>
        <position position="38"/>
    </location>
    <ligand>
        <name>NAD(+)</name>
        <dbReference type="ChEBI" id="CHEBI:57540"/>
    </ligand>
</feature>
<feature type="binding site" evidence="1">
    <location>
        <position position="39"/>
    </location>
    <ligand>
        <name>NADP(+)</name>
        <dbReference type="ChEBI" id="CHEBI:58349"/>
    </ligand>
</feature>
<feature type="binding site" evidence="1">
    <location>
        <begin position="102"/>
        <end position="104"/>
    </location>
    <ligand>
        <name>NAD(+)</name>
        <dbReference type="ChEBI" id="CHEBI:57540"/>
    </ligand>
</feature>
<feature type="binding site" evidence="1">
    <location>
        <begin position="126"/>
        <end position="129"/>
    </location>
    <ligand>
        <name>NAD(+)</name>
        <dbReference type="ChEBI" id="CHEBI:57540"/>
    </ligand>
</feature>
<feature type="binding site" evidence="1">
    <location>
        <position position="160"/>
    </location>
    <ligand>
        <name>(S)-2,3,4,5-tetrahydrodipicolinate</name>
        <dbReference type="ChEBI" id="CHEBI:16845"/>
    </ligand>
</feature>
<feature type="binding site" evidence="1">
    <location>
        <begin position="169"/>
        <end position="170"/>
    </location>
    <ligand>
        <name>(S)-2,3,4,5-tetrahydrodipicolinate</name>
        <dbReference type="ChEBI" id="CHEBI:16845"/>
    </ligand>
</feature>
<protein>
    <recommendedName>
        <fullName evidence="1">4-hydroxy-tetrahydrodipicolinate reductase</fullName>
        <shortName evidence="1">HTPA reductase</shortName>
        <ecNumber evidence="1">1.17.1.8</ecNumber>
    </recommendedName>
</protein>
<dbReference type="EC" id="1.17.1.8" evidence="1"/>
<dbReference type="EMBL" id="AE005174">
    <property type="protein sequence ID" value="AAG54333.1"/>
    <property type="molecule type" value="Genomic_DNA"/>
</dbReference>
<dbReference type="EMBL" id="BA000007">
    <property type="protein sequence ID" value="BAB33457.1"/>
    <property type="molecule type" value="Genomic_DNA"/>
</dbReference>
<dbReference type="PIR" id="A85484">
    <property type="entry name" value="A85484"/>
</dbReference>
<dbReference type="PIR" id="B99633">
    <property type="entry name" value="B99633"/>
</dbReference>
<dbReference type="RefSeq" id="NP_308061.1">
    <property type="nucleotide sequence ID" value="NC_002695.1"/>
</dbReference>
<dbReference type="RefSeq" id="WP_000543582.1">
    <property type="nucleotide sequence ID" value="NZ_VOAI01000002.1"/>
</dbReference>
<dbReference type="SMR" id="P58209"/>
<dbReference type="STRING" id="155864.Z0036"/>
<dbReference type="GeneID" id="913430"/>
<dbReference type="KEGG" id="ece:Z0036"/>
<dbReference type="KEGG" id="ecs:ECs_0034"/>
<dbReference type="PATRIC" id="fig|386585.9.peg.129"/>
<dbReference type="eggNOG" id="COG0289">
    <property type="taxonomic scope" value="Bacteria"/>
</dbReference>
<dbReference type="HOGENOM" id="CLU_047479_2_1_6"/>
<dbReference type="OMA" id="HHPNKAD"/>
<dbReference type="UniPathway" id="UPA00034">
    <property type="reaction ID" value="UER00018"/>
</dbReference>
<dbReference type="Proteomes" id="UP000000558">
    <property type="component" value="Chromosome"/>
</dbReference>
<dbReference type="Proteomes" id="UP000002519">
    <property type="component" value="Chromosome"/>
</dbReference>
<dbReference type="GO" id="GO:0005829">
    <property type="term" value="C:cytosol"/>
    <property type="evidence" value="ECO:0007669"/>
    <property type="project" value="TreeGrafter"/>
</dbReference>
<dbReference type="GO" id="GO:0008839">
    <property type="term" value="F:4-hydroxy-tetrahydrodipicolinate reductase"/>
    <property type="evidence" value="ECO:0007669"/>
    <property type="project" value="UniProtKB-EC"/>
</dbReference>
<dbReference type="GO" id="GO:0051287">
    <property type="term" value="F:NAD binding"/>
    <property type="evidence" value="ECO:0007669"/>
    <property type="project" value="UniProtKB-UniRule"/>
</dbReference>
<dbReference type="GO" id="GO:0050661">
    <property type="term" value="F:NADP binding"/>
    <property type="evidence" value="ECO:0007669"/>
    <property type="project" value="UniProtKB-UniRule"/>
</dbReference>
<dbReference type="GO" id="GO:0016726">
    <property type="term" value="F:oxidoreductase activity, acting on CH or CH2 groups, NAD or NADP as acceptor"/>
    <property type="evidence" value="ECO:0007669"/>
    <property type="project" value="UniProtKB-UniRule"/>
</dbReference>
<dbReference type="GO" id="GO:0019877">
    <property type="term" value="P:diaminopimelate biosynthetic process"/>
    <property type="evidence" value="ECO:0007669"/>
    <property type="project" value="UniProtKB-UniRule"/>
</dbReference>
<dbReference type="GO" id="GO:0009089">
    <property type="term" value="P:lysine biosynthetic process via diaminopimelate"/>
    <property type="evidence" value="ECO:0007669"/>
    <property type="project" value="UniProtKB-UniRule"/>
</dbReference>
<dbReference type="CDD" id="cd02274">
    <property type="entry name" value="DHDPR_N"/>
    <property type="match status" value="1"/>
</dbReference>
<dbReference type="FunFam" id="3.30.360.10:FF:000004">
    <property type="entry name" value="4-hydroxy-tetrahydrodipicolinate reductase"/>
    <property type="match status" value="1"/>
</dbReference>
<dbReference type="FunFam" id="3.40.50.720:FF:000048">
    <property type="entry name" value="4-hydroxy-tetrahydrodipicolinate reductase"/>
    <property type="match status" value="1"/>
</dbReference>
<dbReference type="Gene3D" id="3.30.360.10">
    <property type="entry name" value="Dihydrodipicolinate Reductase, domain 2"/>
    <property type="match status" value="1"/>
</dbReference>
<dbReference type="Gene3D" id="3.40.50.720">
    <property type="entry name" value="NAD(P)-binding Rossmann-like Domain"/>
    <property type="match status" value="1"/>
</dbReference>
<dbReference type="HAMAP" id="MF_00102">
    <property type="entry name" value="DapB"/>
    <property type="match status" value="1"/>
</dbReference>
<dbReference type="InterPro" id="IPR022663">
    <property type="entry name" value="DapB_C"/>
</dbReference>
<dbReference type="InterPro" id="IPR000846">
    <property type="entry name" value="DapB_N"/>
</dbReference>
<dbReference type="InterPro" id="IPR022664">
    <property type="entry name" value="DapB_N_CS"/>
</dbReference>
<dbReference type="InterPro" id="IPR023940">
    <property type="entry name" value="DHDPR_bac"/>
</dbReference>
<dbReference type="InterPro" id="IPR036291">
    <property type="entry name" value="NAD(P)-bd_dom_sf"/>
</dbReference>
<dbReference type="NCBIfam" id="TIGR00036">
    <property type="entry name" value="dapB"/>
    <property type="match status" value="1"/>
</dbReference>
<dbReference type="PANTHER" id="PTHR20836:SF0">
    <property type="entry name" value="4-HYDROXY-TETRAHYDRODIPICOLINATE REDUCTASE 1, CHLOROPLASTIC-RELATED"/>
    <property type="match status" value="1"/>
</dbReference>
<dbReference type="PANTHER" id="PTHR20836">
    <property type="entry name" value="DIHYDRODIPICOLINATE REDUCTASE"/>
    <property type="match status" value="1"/>
</dbReference>
<dbReference type="Pfam" id="PF05173">
    <property type="entry name" value="DapB_C"/>
    <property type="match status" value="1"/>
</dbReference>
<dbReference type="Pfam" id="PF01113">
    <property type="entry name" value="DapB_N"/>
    <property type="match status" value="1"/>
</dbReference>
<dbReference type="PIRSF" id="PIRSF000161">
    <property type="entry name" value="DHPR"/>
    <property type="match status" value="1"/>
</dbReference>
<dbReference type="SUPFAM" id="SSF55347">
    <property type="entry name" value="Glyceraldehyde-3-phosphate dehydrogenase-like, C-terminal domain"/>
    <property type="match status" value="1"/>
</dbReference>
<dbReference type="SUPFAM" id="SSF51735">
    <property type="entry name" value="NAD(P)-binding Rossmann-fold domains"/>
    <property type="match status" value="1"/>
</dbReference>
<dbReference type="PROSITE" id="PS01298">
    <property type="entry name" value="DAPB"/>
    <property type="match status" value="1"/>
</dbReference>
<proteinExistence type="inferred from homology"/>
<name>DAPB_ECO57</name>
<comment type="function">
    <text evidence="1">Catalyzes the conversion of 4-hydroxy-tetrahydrodipicolinate (HTPA) to tetrahydrodipicolinate.</text>
</comment>
<comment type="catalytic activity">
    <reaction evidence="1">
        <text>(S)-2,3,4,5-tetrahydrodipicolinate + NAD(+) + H2O = (2S,4S)-4-hydroxy-2,3,4,5-tetrahydrodipicolinate + NADH + H(+)</text>
        <dbReference type="Rhea" id="RHEA:35323"/>
        <dbReference type="ChEBI" id="CHEBI:15377"/>
        <dbReference type="ChEBI" id="CHEBI:15378"/>
        <dbReference type="ChEBI" id="CHEBI:16845"/>
        <dbReference type="ChEBI" id="CHEBI:57540"/>
        <dbReference type="ChEBI" id="CHEBI:57945"/>
        <dbReference type="ChEBI" id="CHEBI:67139"/>
        <dbReference type="EC" id="1.17.1.8"/>
    </reaction>
</comment>
<comment type="catalytic activity">
    <reaction evidence="1">
        <text>(S)-2,3,4,5-tetrahydrodipicolinate + NADP(+) + H2O = (2S,4S)-4-hydroxy-2,3,4,5-tetrahydrodipicolinate + NADPH + H(+)</text>
        <dbReference type="Rhea" id="RHEA:35331"/>
        <dbReference type="ChEBI" id="CHEBI:15377"/>
        <dbReference type="ChEBI" id="CHEBI:15378"/>
        <dbReference type="ChEBI" id="CHEBI:16845"/>
        <dbReference type="ChEBI" id="CHEBI:57783"/>
        <dbReference type="ChEBI" id="CHEBI:58349"/>
        <dbReference type="ChEBI" id="CHEBI:67139"/>
        <dbReference type="EC" id="1.17.1.8"/>
    </reaction>
</comment>
<comment type="pathway">
    <text evidence="1">Amino-acid biosynthesis; L-lysine biosynthesis via DAP pathway; (S)-tetrahydrodipicolinate from L-aspartate: step 4/4.</text>
</comment>
<comment type="subunit">
    <text evidence="1">Homotetramer.</text>
</comment>
<comment type="subcellular location">
    <subcellularLocation>
        <location evidence="1">Cytoplasm</location>
    </subcellularLocation>
</comment>
<comment type="similarity">
    <text evidence="1">Belongs to the DapB family.</text>
</comment>
<comment type="caution">
    <text evidence="2">Was originally thought to be a dihydrodipicolinate reductase (DHDPR), catalyzing the conversion of dihydrodipicolinate to tetrahydrodipicolinate. However, it was shown in E.coli that the substrate of the enzymatic reaction is not dihydrodipicolinate (DHDP) but in fact (2S,4S)-4-hydroxy-2,3,4,5-tetrahydrodipicolinic acid (HTPA), the product released by the DapA-catalyzed reaction.</text>
</comment>
<reference key="1">
    <citation type="journal article" date="2001" name="Nature">
        <title>Genome sequence of enterohaemorrhagic Escherichia coli O157:H7.</title>
        <authorList>
            <person name="Perna N.T."/>
            <person name="Plunkett G. III"/>
            <person name="Burland V."/>
            <person name="Mau B."/>
            <person name="Glasner J.D."/>
            <person name="Rose D.J."/>
            <person name="Mayhew G.F."/>
            <person name="Evans P.S."/>
            <person name="Gregor J."/>
            <person name="Kirkpatrick H.A."/>
            <person name="Posfai G."/>
            <person name="Hackett J."/>
            <person name="Klink S."/>
            <person name="Boutin A."/>
            <person name="Shao Y."/>
            <person name="Miller L."/>
            <person name="Grotbeck E.J."/>
            <person name="Davis N.W."/>
            <person name="Lim A."/>
            <person name="Dimalanta E.T."/>
            <person name="Potamousis K."/>
            <person name="Apodaca J."/>
            <person name="Anantharaman T.S."/>
            <person name="Lin J."/>
            <person name="Yen G."/>
            <person name="Schwartz D.C."/>
            <person name="Welch R.A."/>
            <person name="Blattner F.R."/>
        </authorList>
    </citation>
    <scope>NUCLEOTIDE SEQUENCE [LARGE SCALE GENOMIC DNA]</scope>
    <source>
        <strain>O157:H7 / EDL933 / ATCC 700927 / EHEC</strain>
    </source>
</reference>
<reference key="2">
    <citation type="journal article" date="2001" name="DNA Res.">
        <title>Complete genome sequence of enterohemorrhagic Escherichia coli O157:H7 and genomic comparison with a laboratory strain K-12.</title>
        <authorList>
            <person name="Hayashi T."/>
            <person name="Makino K."/>
            <person name="Ohnishi M."/>
            <person name="Kurokawa K."/>
            <person name="Ishii K."/>
            <person name="Yokoyama K."/>
            <person name="Han C.-G."/>
            <person name="Ohtsubo E."/>
            <person name="Nakayama K."/>
            <person name="Murata T."/>
            <person name="Tanaka M."/>
            <person name="Tobe T."/>
            <person name="Iida T."/>
            <person name="Takami H."/>
            <person name="Honda T."/>
            <person name="Sasakawa C."/>
            <person name="Ogasawara N."/>
            <person name="Yasunaga T."/>
            <person name="Kuhara S."/>
            <person name="Shiba T."/>
            <person name="Hattori M."/>
            <person name="Shinagawa H."/>
        </authorList>
    </citation>
    <scope>NUCLEOTIDE SEQUENCE [LARGE SCALE GENOMIC DNA]</scope>
    <source>
        <strain>O157:H7 / Sakai / RIMD 0509952 / EHEC</strain>
    </source>
</reference>
<sequence length="273" mass="28798">MHDANIRVAIAGAGGRMGRQLIQAALALEGVQLGAALEREGSSLLGSDAGELAGAGKTGVTVQSSLDAIKDDFDVFIDFTRPEGTLNHLAFCRQHGKGMVIGTTGFDEAGKQAIRDAAADIAIVFAANFSVGVNVMLKLLEKAAKVMGDYTDIEIIEAHHRHKVDAPSGTALAMGEAIAHALDKDLKDCAVYSREGHTGERVPGTIGFATVRAGDIVGEHTAMFADIGERLEITHKASSRMTFANGAVRSALWLSGKENGLFDMRDVLDLNNL</sequence>
<accession>P58209</accession>
<gene>
    <name evidence="1" type="primary">dapB</name>
    <name type="ordered locus">Z0036</name>
    <name type="ordered locus">ECs0034</name>
</gene>